<reference key="1">
    <citation type="journal article" date="2003" name="Biochem. J.">
        <title>Structural and biochemical characterization of a new type of lectin isolated from carp eggs.</title>
        <authorList>
            <person name="Galliano M."/>
            <person name="Minchiotti L."/>
            <person name="Campagnoli M."/>
            <person name="Sala A."/>
            <person name="Visai L."/>
            <person name="Amoresano A."/>
            <person name="Pucci P."/>
            <person name="Casbarra A."/>
            <person name="Cauci M."/>
            <person name="Perduca M."/>
            <person name="Monaco H.L."/>
        </authorList>
    </citation>
    <scope>PROTEIN SEQUENCE</scope>
    <scope>DISULFIDE BONDS</scope>
    <scope>GLYCOSYLATION AT ASN-27</scope>
    <scope>FUNCTION</scope>
    <scope>SUBUNIT</scope>
    <scope>TISSUE SPECIFICITY</scope>
    <source>
        <tissue>Egg</tissue>
    </source>
</reference>
<organism>
    <name type="scientific">Cyprinus carpio</name>
    <name type="common">Common carp</name>
    <dbReference type="NCBI Taxonomy" id="7962"/>
    <lineage>
        <taxon>Eukaryota</taxon>
        <taxon>Metazoa</taxon>
        <taxon>Chordata</taxon>
        <taxon>Craniata</taxon>
        <taxon>Vertebrata</taxon>
        <taxon>Euteleostomi</taxon>
        <taxon>Actinopterygii</taxon>
        <taxon>Neopterygii</taxon>
        <taxon>Teleostei</taxon>
        <taxon>Ostariophysi</taxon>
        <taxon>Cypriniformes</taxon>
        <taxon>Cyprinidae</taxon>
        <taxon>Cyprininae</taxon>
        <taxon>Cyprinus</taxon>
    </lineage>
</organism>
<proteinExistence type="evidence at protein level"/>
<accession>P68512</accession>
<keyword id="KW-0002">3D-structure</keyword>
<keyword id="KW-0903">Direct protein sequencing</keyword>
<keyword id="KW-1015">Disulfide bond</keyword>
<keyword id="KW-0325">Glycoprotein</keyword>
<keyword id="KW-0430">Lectin</keyword>
<keyword id="KW-1185">Reference proteome</keyword>
<keyword id="KW-0677">Repeat</keyword>
<keyword id="KW-0964">Secreted</keyword>
<sequence>LDCTVIDGNLKQIDAGSGSVVGVNNLNETFVLIDNVFTKISGSLKHFSVGPAGQLGVNTANNIFKYQSGGFVQLAGLLKQVDAGGDQIIAGVNMYDDIYCLNMDANNKWPSSNTPWVQINGKLKYYSCGPYSCWGVNSNDQIFIMKDVSSNVCSGSGSFINIPGLLSMIEVATDGSVFGVNSQGNLYQRTGVTRSKPDGTDWISMVACPNGHKHVSFDLGVLWLVCVDGSIRKCILTD</sequence>
<evidence type="ECO:0000269" key="1">
    <source>
    </source>
</evidence>
<evidence type="ECO:0000305" key="2"/>
<evidence type="ECO:0007829" key="3">
    <source>
        <dbReference type="PDB" id="4RUQ"/>
    </source>
</evidence>
<comment type="function">
    <text evidence="1">Lipopolysaccharide-binding protein with a very low agglutinating activity for human A-type erythrocytes and interacts with both Gram-positive and Gram-negative bacteria.</text>
</comment>
<comment type="subcellular location">
    <subcellularLocation>
        <location>Secreted</location>
    </subcellularLocation>
</comment>
<comment type="tissue specificity">
    <text evidence="1">Expressed in the eggs.</text>
</comment>
<comment type="similarity">
    <text evidence="2">Belongs to the tectonin family.</text>
</comment>
<feature type="chain" id="PRO_0000221478" description="Fish-egg lectin">
    <location>
        <begin position="1"/>
        <end position="238"/>
    </location>
</feature>
<feature type="repeat" description="1">
    <location>
        <begin position="1"/>
        <end position="34"/>
    </location>
</feature>
<feature type="repeat" description="2">
    <location>
        <begin position="35"/>
        <end position="68"/>
    </location>
</feature>
<feature type="repeat" description="3">
    <location>
        <begin position="69"/>
        <end position="106"/>
    </location>
</feature>
<feature type="repeat" description="4">
    <location>
        <begin position="107"/>
        <end position="156"/>
    </location>
</feature>
<feature type="repeat" description="5">
    <location>
        <begin position="157"/>
        <end position="199"/>
    </location>
</feature>
<feature type="region of interest" description="5 X approximate tandem repeats">
    <location>
        <begin position="1"/>
        <end position="199"/>
    </location>
</feature>
<feature type="glycosylation site" description="N-linked (GlcNAc...) asparagine" evidence="1">
    <location>
        <position position="27"/>
    </location>
</feature>
<feature type="disulfide bond" evidence="1">
    <location>
        <begin position="3"/>
        <end position="234"/>
    </location>
</feature>
<feature type="disulfide bond" evidence="1">
    <location>
        <begin position="100"/>
        <end position="153"/>
    </location>
</feature>
<feature type="disulfide bond" evidence="1">
    <location>
        <begin position="128"/>
        <end position="133"/>
    </location>
</feature>
<feature type="disulfide bond" evidence="1">
    <location>
        <begin position="208"/>
        <end position="226"/>
    </location>
</feature>
<feature type="strand" evidence="3">
    <location>
        <begin position="4"/>
        <end position="7"/>
    </location>
</feature>
<feature type="strand" evidence="3">
    <location>
        <begin position="11"/>
        <end position="16"/>
    </location>
</feature>
<feature type="strand" evidence="3">
    <location>
        <begin position="19"/>
        <end position="23"/>
    </location>
</feature>
<feature type="strand" evidence="3">
    <location>
        <begin position="28"/>
        <end position="33"/>
    </location>
</feature>
<feature type="strand" evidence="3">
    <location>
        <begin position="36"/>
        <end position="43"/>
    </location>
</feature>
<feature type="strand" evidence="3">
    <location>
        <begin position="45"/>
        <end position="50"/>
    </location>
</feature>
<feature type="strand" evidence="3">
    <location>
        <begin position="53"/>
        <end position="57"/>
    </location>
</feature>
<feature type="strand" evidence="3">
    <location>
        <begin position="62"/>
        <end position="67"/>
    </location>
</feature>
<feature type="strand" evidence="3">
    <location>
        <begin position="70"/>
        <end position="77"/>
    </location>
</feature>
<feature type="strand" evidence="3">
    <location>
        <begin position="79"/>
        <end position="82"/>
    </location>
</feature>
<feature type="strand" evidence="3">
    <location>
        <begin position="85"/>
        <end position="87"/>
    </location>
</feature>
<feature type="strand" evidence="3">
    <location>
        <begin position="89"/>
        <end position="92"/>
    </location>
</feature>
<feature type="strand" evidence="3">
    <location>
        <begin position="98"/>
        <end position="101"/>
    </location>
</feature>
<feature type="helix" evidence="3">
    <location>
        <begin position="103"/>
        <end position="106"/>
    </location>
</feature>
<feature type="strand" evidence="3">
    <location>
        <begin position="117"/>
        <end position="121"/>
    </location>
</feature>
<feature type="strand" evidence="3">
    <location>
        <begin position="124"/>
        <end position="128"/>
    </location>
</feature>
<feature type="strand" evidence="3">
    <location>
        <begin position="133"/>
        <end position="136"/>
    </location>
</feature>
<feature type="strand" evidence="3">
    <location>
        <begin position="141"/>
        <end position="145"/>
    </location>
</feature>
<feature type="turn" evidence="3">
    <location>
        <begin position="153"/>
        <end position="156"/>
    </location>
</feature>
<feature type="strand" evidence="3">
    <location>
        <begin position="160"/>
        <end position="165"/>
    </location>
</feature>
<feature type="strand" evidence="3">
    <location>
        <begin position="167"/>
        <end position="171"/>
    </location>
</feature>
<feature type="strand" evidence="3">
    <location>
        <begin position="177"/>
        <end position="180"/>
    </location>
</feature>
<feature type="strand" evidence="3">
    <location>
        <begin position="186"/>
        <end position="191"/>
    </location>
</feature>
<feature type="strand" evidence="3">
    <location>
        <begin position="194"/>
        <end position="196"/>
    </location>
</feature>
<feature type="strand" evidence="3">
    <location>
        <begin position="200"/>
        <end position="205"/>
    </location>
</feature>
<feature type="strand" evidence="3">
    <location>
        <begin position="208"/>
        <end position="210"/>
    </location>
</feature>
<feature type="strand" evidence="3">
    <location>
        <begin position="212"/>
        <end position="218"/>
    </location>
</feature>
<feature type="strand" evidence="3">
    <location>
        <begin position="221"/>
        <end position="226"/>
    </location>
</feature>
<feature type="strand" evidence="3">
    <location>
        <begin position="231"/>
        <end position="235"/>
    </location>
</feature>
<protein>
    <recommendedName>
        <fullName>Fish-egg lectin</fullName>
        <shortName>FEL</shortName>
    </recommendedName>
</protein>
<dbReference type="PDB" id="4RUQ">
    <property type="method" value="X-ray"/>
    <property type="resolution" value="1.35 A"/>
    <property type="chains" value="A/B=1-238"/>
</dbReference>
<dbReference type="PDB" id="4RUS">
    <property type="method" value="X-ray"/>
    <property type="resolution" value="1.70 A"/>
    <property type="chains" value="A/B/C/D/E/F=1-238"/>
</dbReference>
<dbReference type="PDBsum" id="4RUQ"/>
<dbReference type="PDBsum" id="4RUS"/>
<dbReference type="SMR" id="P68512"/>
<dbReference type="UniLectin" id="P68512"/>
<dbReference type="iPTMnet" id="P68512"/>
<dbReference type="EvolutionaryTrace" id="P68512"/>
<dbReference type="Proteomes" id="UP000694384">
    <property type="component" value="Unplaced"/>
</dbReference>
<dbReference type="Proteomes" id="UP000694427">
    <property type="component" value="Unplaced"/>
</dbReference>
<dbReference type="Proteomes" id="UP000694700">
    <property type="component" value="Unplaced"/>
</dbReference>
<dbReference type="Proteomes" id="UP000694701">
    <property type="component" value="Unplaced"/>
</dbReference>
<dbReference type="Proteomes" id="UP001155660">
    <property type="component" value="Unplaced"/>
</dbReference>
<dbReference type="GO" id="GO:0005576">
    <property type="term" value="C:extracellular region"/>
    <property type="evidence" value="ECO:0007669"/>
    <property type="project" value="UniProtKB-SubCell"/>
</dbReference>
<dbReference type="GO" id="GO:0030246">
    <property type="term" value="F:carbohydrate binding"/>
    <property type="evidence" value="ECO:0007669"/>
    <property type="project" value="UniProtKB-KW"/>
</dbReference>
<dbReference type="InterPro" id="IPR006624">
    <property type="entry name" value="Beta-propeller_rpt_TECPR"/>
</dbReference>
<dbReference type="InterPro" id="IPR051513">
    <property type="entry name" value="Tectonin_beta-propeller"/>
</dbReference>
<dbReference type="PANTHER" id="PTHR23250">
    <property type="entry name" value="DYSFERLIN-RELATED"/>
    <property type="match status" value="1"/>
</dbReference>
<dbReference type="PANTHER" id="PTHR23250:SF3">
    <property type="entry name" value="FISH-EGG LECTIN-LIKE ISOFORM X1-RELATED"/>
    <property type="match status" value="1"/>
</dbReference>
<dbReference type="Pfam" id="PF19193">
    <property type="entry name" value="Tectonin"/>
    <property type="match status" value="1"/>
</dbReference>
<dbReference type="SMART" id="SM00706">
    <property type="entry name" value="TECPR"/>
    <property type="match status" value="5"/>
</dbReference>
<name>FEL_CYPCA</name>